<proteinExistence type="inferred from homology"/>
<name>SEC23_YARLI</name>
<feature type="chain" id="PRO_0000295474" description="Protein transport protein SEC23">
    <location>
        <begin position="1"/>
        <end position="758"/>
    </location>
</feature>
<feature type="binding site" evidence="1">
    <location>
        <position position="56"/>
    </location>
    <ligand>
        <name>Zn(2+)</name>
        <dbReference type="ChEBI" id="CHEBI:29105"/>
    </ligand>
</feature>
<feature type="binding site" evidence="1">
    <location>
        <position position="60"/>
    </location>
    <ligand>
        <name>Zn(2+)</name>
        <dbReference type="ChEBI" id="CHEBI:29105"/>
    </ligand>
</feature>
<feature type="binding site" evidence="1">
    <location>
        <position position="79"/>
    </location>
    <ligand>
        <name>Zn(2+)</name>
        <dbReference type="ChEBI" id="CHEBI:29105"/>
    </ligand>
</feature>
<feature type="binding site" evidence="1">
    <location>
        <position position="82"/>
    </location>
    <ligand>
        <name>Zn(2+)</name>
        <dbReference type="ChEBI" id="CHEBI:29105"/>
    </ligand>
</feature>
<organism>
    <name type="scientific">Yarrowia lipolytica (strain CLIB 122 / E 150)</name>
    <name type="common">Yeast</name>
    <name type="synonym">Candida lipolytica</name>
    <dbReference type="NCBI Taxonomy" id="284591"/>
    <lineage>
        <taxon>Eukaryota</taxon>
        <taxon>Fungi</taxon>
        <taxon>Dikarya</taxon>
        <taxon>Ascomycota</taxon>
        <taxon>Saccharomycotina</taxon>
        <taxon>Dipodascomycetes</taxon>
        <taxon>Dipodascales</taxon>
        <taxon>Dipodascales incertae sedis</taxon>
        <taxon>Yarrowia</taxon>
    </lineage>
</organism>
<protein>
    <recommendedName>
        <fullName>Protein transport protein SEC23</fullName>
    </recommendedName>
</protein>
<keyword id="KW-0963">Cytoplasm</keyword>
<keyword id="KW-0968">Cytoplasmic vesicle</keyword>
<keyword id="KW-0256">Endoplasmic reticulum</keyword>
<keyword id="KW-0931">ER-Golgi transport</keyword>
<keyword id="KW-0333">Golgi apparatus</keyword>
<keyword id="KW-0472">Membrane</keyword>
<keyword id="KW-0479">Metal-binding</keyword>
<keyword id="KW-0653">Protein transport</keyword>
<keyword id="KW-1185">Reference proteome</keyword>
<keyword id="KW-0813">Transport</keyword>
<keyword id="KW-0862">Zinc</keyword>
<accession>Q6C5L5</accession>
<gene>
    <name type="primary">SEC23</name>
    <name type="ordered locus">YALI0E16995g</name>
</gene>
<comment type="function">
    <text evidence="1">Component of the coat protein complex II (COPII) which promotes the formation of transport vesicles from the endoplasmic reticulum (ER). The coat has two main functions, the physical deformation of the endoplasmic reticulum membrane into vesicles and the selection of cargo molecules (By similarity).</text>
</comment>
<comment type="subunit">
    <text evidence="1">The COPII coat is composed of at least 5 proteins: the SEC23/24 complex, the SEC13/31 complex, and the protein SAR1.</text>
</comment>
<comment type="subcellular location">
    <subcellularLocation>
        <location evidence="1">Cytoplasm</location>
    </subcellularLocation>
    <subcellularLocation>
        <location evidence="1">Cytoplasmic vesicle</location>
        <location evidence="1">COPII-coated vesicle membrane</location>
        <topology evidence="1">Peripheral membrane protein</topology>
        <orientation evidence="1">Cytoplasmic side</orientation>
    </subcellularLocation>
    <subcellularLocation>
        <location evidence="1">Endoplasmic reticulum membrane</location>
        <topology evidence="1">Peripheral membrane protein</topology>
        <orientation evidence="1">Cytoplasmic side</orientation>
    </subcellularLocation>
    <subcellularLocation>
        <location evidence="1">Golgi apparatus membrane</location>
        <topology evidence="1">Peripheral membrane protein</topology>
        <orientation evidence="1">Cytoplasmic side</orientation>
    </subcellularLocation>
</comment>
<comment type="similarity">
    <text evidence="2">Belongs to the SEC23/SEC24 family. SEC23 subfamily.</text>
</comment>
<dbReference type="EMBL" id="CR382131">
    <property type="protein sequence ID" value="CAG79640.2"/>
    <property type="molecule type" value="Genomic_DNA"/>
</dbReference>
<dbReference type="RefSeq" id="XP_504047.2">
    <property type="nucleotide sequence ID" value="XM_504047.2"/>
</dbReference>
<dbReference type="SMR" id="Q6C5L5"/>
<dbReference type="FunCoup" id="Q6C5L5">
    <property type="interactions" value="1056"/>
</dbReference>
<dbReference type="STRING" id="284591.Q6C5L5"/>
<dbReference type="EnsemblFungi" id="CAG79640">
    <property type="protein sequence ID" value="CAG79640"/>
    <property type="gene ID" value="YALI0_E16995g"/>
</dbReference>
<dbReference type="KEGG" id="yli:2911646"/>
<dbReference type="VEuPathDB" id="FungiDB:YALI0_E16995g"/>
<dbReference type="HOGENOM" id="CLU_008658_3_0_1"/>
<dbReference type="InParanoid" id="Q6C5L5"/>
<dbReference type="OMA" id="FPPHYAE"/>
<dbReference type="OrthoDB" id="9299at4891"/>
<dbReference type="Proteomes" id="UP000001300">
    <property type="component" value="Chromosome E"/>
</dbReference>
<dbReference type="GO" id="GO:0030127">
    <property type="term" value="C:COPII vesicle coat"/>
    <property type="evidence" value="ECO:0000318"/>
    <property type="project" value="GO_Central"/>
</dbReference>
<dbReference type="GO" id="GO:0070971">
    <property type="term" value="C:endoplasmic reticulum exit site"/>
    <property type="evidence" value="ECO:0000318"/>
    <property type="project" value="GO_Central"/>
</dbReference>
<dbReference type="GO" id="GO:0005789">
    <property type="term" value="C:endoplasmic reticulum membrane"/>
    <property type="evidence" value="ECO:0007669"/>
    <property type="project" value="UniProtKB-SubCell"/>
</dbReference>
<dbReference type="GO" id="GO:0000139">
    <property type="term" value="C:Golgi membrane"/>
    <property type="evidence" value="ECO:0007669"/>
    <property type="project" value="UniProtKB-SubCell"/>
</dbReference>
<dbReference type="GO" id="GO:0005096">
    <property type="term" value="F:GTPase activator activity"/>
    <property type="evidence" value="ECO:0000318"/>
    <property type="project" value="GO_Central"/>
</dbReference>
<dbReference type="GO" id="GO:0008270">
    <property type="term" value="F:zinc ion binding"/>
    <property type="evidence" value="ECO:0007669"/>
    <property type="project" value="InterPro"/>
</dbReference>
<dbReference type="GO" id="GO:0090110">
    <property type="term" value="P:COPII-coated vesicle cargo loading"/>
    <property type="evidence" value="ECO:0000318"/>
    <property type="project" value="GO_Central"/>
</dbReference>
<dbReference type="GO" id="GO:0006886">
    <property type="term" value="P:intracellular protein transport"/>
    <property type="evidence" value="ECO:0007669"/>
    <property type="project" value="InterPro"/>
</dbReference>
<dbReference type="CDD" id="cd11287">
    <property type="entry name" value="Sec23_C"/>
    <property type="match status" value="1"/>
</dbReference>
<dbReference type="FunFam" id="1.20.120.730:FF:000001">
    <property type="entry name" value="Protein transport protein SEC23"/>
    <property type="match status" value="1"/>
</dbReference>
<dbReference type="FunFam" id="2.30.30.380:FF:000001">
    <property type="entry name" value="Protein transport protein SEC23"/>
    <property type="match status" value="1"/>
</dbReference>
<dbReference type="FunFam" id="3.40.20.10:FF:000006">
    <property type="entry name" value="Protein transport protein SEC23"/>
    <property type="match status" value="1"/>
</dbReference>
<dbReference type="FunFam" id="3.40.50.410:FF:000008">
    <property type="entry name" value="Protein transport protein SEC23"/>
    <property type="match status" value="1"/>
</dbReference>
<dbReference type="Gene3D" id="2.60.40.1670">
    <property type="entry name" value="beta-sandwich domain of Sec23/24"/>
    <property type="match status" value="1"/>
</dbReference>
<dbReference type="Gene3D" id="1.20.120.730">
    <property type="entry name" value="Sec23/Sec24 helical domain"/>
    <property type="match status" value="1"/>
</dbReference>
<dbReference type="Gene3D" id="3.40.20.10">
    <property type="entry name" value="Severin"/>
    <property type="match status" value="1"/>
</dbReference>
<dbReference type="Gene3D" id="3.40.50.410">
    <property type="entry name" value="von Willebrand factor, type A domain"/>
    <property type="match status" value="1"/>
</dbReference>
<dbReference type="Gene3D" id="2.30.30.380">
    <property type="entry name" value="Zn-finger domain of Sec23/24"/>
    <property type="match status" value="1"/>
</dbReference>
<dbReference type="InterPro" id="IPR029006">
    <property type="entry name" value="ADF-H/Gelsolin-like_dom_sf"/>
</dbReference>
<dbReference type="InterPro" id="IPR007123">
    <property type="entry name" value="Gelsolin-like_dom"/>
</dbReference>
<dbReference type="InterPro" id="IPR036180">
    <property type="entry name" value="Gelsolin-like_dom_sf"/>
</dbReference>
<dbReference type="InterPro" id="IPR037364">
    <property type="entry name" value="Sec23"/>
</dbReference>
<dbReference type="InterPro" id="IPR006900">
    <property type="entry name" value="Sec23/24_helical_dom"/>
</dbReference>
<dbReference type="InterPro" id="IPR036175">
    <property type="entry name" value="Sec23/24_helical_dom_sf"/>
</dbReference>
<dbReference type="InterPro" id="IPR006896">
    <property type="entry name" value="Sec23/24_trunk_dom"/>
</dbReference>
<dbReference type="InterPro" id="IPR012990">
    <property type="entry name" value="Sec23_24_beta_S"/>
</dbReference>
<dbReference type="InterPro" id="IPR037550">
    <property type="entry name" value="Sec23_C"/>
</dbReference>
<dbReference type="InterPro" id="IPR036465">
    <property type="entry name" value="vWFA_dom_sf"/>
</dbReference>
<dbReference type="InterPro" id="IPR006895">
    <property type="entry name" value="Znf_Sec23_Sec24"/>
</dbReference>
<dbReference type="InterPro" id="IPR036174">
    <property type="entry name" value="Znf_Sec23_Sec24_sf"/>
</dbReference>
<dbReference type="PANTHER" id="PTHR11141">
    <property type="entry name" value="PROTEIN TRANSPORT PROTEIN SEC23"/>
    <property type="match status" value="1"/>
</dbReference>
<dbReference type="PANTHER" id="PTHR11141:SF0">
    <property type="entry name" value="PROTEIN TRANSPORT PROTEIN SEC23"/>
    <property type="match status" value="1"/>
</dbReference>
<dbReference type="Pfam" id="PF00626">
    <property type="entry name" value="Gelsolin"/>
    <property type="match status" value="1"/>
</dbReference>
<dbReference type="Pfam" id="PF08033">
    <property type="entry name" value="Sec23_BS"/>
    <property type="match status" value="1"/>
</dbReference>
<dbReference type="Pfam" id="PF04815">
    <property type="entry name" value="Sec23_helical"/>
    <property type="match status" value="1"/>
</dbReference>
<dbReference type="Pfam" id="PF04811">
    <property type="entry name" value="Sec23_trunk"/>
    <property type="match status" value="1"/>
</dbReference>
<dbReference type="Pfam" id="PF04810">
    <property type="entry name" value="zf-Sec23_Sec24"/>
    <property type="match status" value="1"/>
</dbReference>
<dbReference type="SUPFAM" id="SSF81995">
    <property type="entry name" value="beta-sandwich domain of Sec23/24"/>
    <property type="match status" value="1"/>
</dbReference>
<dbReference type="SUPFAM" id="SSF82754">
    <property type="entry name" value="C-terminal, gelsolin-like domain of Sec23/24"/>
    <property type="match status" value="1"/>
</dbReference>
<dbReference type="SUPFAM" id="SSF81811">
    <property type="entry name" value="Helical domain of Sec23/24"/>
    <property type="match status" value="1"/>
</dbReference>
<dbReference type="SUPFAM" id="SSF53300">
    <property type="entry name" value="vWA-like"/>
    <property type="match status" value="1"/>
</dbReference>
<dbReference type="SUPFAM" id="SSF82919">
    <property type="entry name" value="Zn-finger domain of Sec23/24"/>
    <property type="match status" value="1"/>
</dbReference>
<evidence type="ECO:0000250" key="1"/>
<evidence type="ECO:0000305" key="2"/>
<reference key="1">
    <citation type="journal article" date="2004" name="Nature">
        <title>Genome evolution in yeasts.</title>
        <authorList>
            <person name="Dujon B."/>
            <person name="Sherman D."/>
            <person name="Fischer G."/>
            <person name="Durrens P."/>
            <person name="Casaregola S."/>
            <person name="Lafontaine I."/>
            <person name="de Montigny J."/>
            <person name="Marck C."/>
            <person name="Neuveglise C."/>
            <person name="Talla E."/>
            <person name="Goffard N."/>
            <person name="Frangeul L."/>
            <person name="Aigle M."/>
            <person name="Anthouard V."/>
            <person name="Babour A."/>
            <person name="Barbe V."/>
            <person name="Barnay S."/>
            <person name="Blanchin S."/>
            <person name="Beckerich J.-M."/>
            <person name="Beyne E."/>
            <person name="Bleykasten C."/>
            <person name="Boisrame A."/>
            <person name="Boyer J."/>
            <person name="Cattolico L."/>
            <person name="Confanioleri F."/>
            <person name="de Daruvar A."/>
            <person name="Despons L."/>
            <person name="Fabre E."/>
            <person name="Fairhead C."/>
            <person name="Ferry-Dumazet H."/>
            <person name="Groppi A."/>
            <person name="Hantraye F."/>
            <person name="Hennequin C."/>
            <person name="Jauniaux N."/>
            <person name="Joyet P."/>
            <person name="Kachouri R."/>
            <person name="Kerrest A."/>
            <person name="Koszul R."/>
            <person name="Lemaire M."/>
            <person name="Lesur I."/>
            <person name="Ma L."/>
            <person name="Muller H."/>
            <person name="Nicaud J.-M."/>
            <person name="Nikolski M."/>
            <person name="Oztas S."/>
            <person name="Ozier-Kalogeropoulos O."/>
            <person name="Pellenz S."/>
            <person name="Potier S."/>
            <person name="Richard G.-F."/>
            <person name="Straub M.-L."/>
            <person name="Suleau A."/>
            <person name="Swennen D."/>
            <person name="Tekaia F."/>
            <person name="Wesolowski-Louvel M."/>
            <person name="Westhof E."/>
            <person name="Wirth B."/>
            <person name="Zeniou-Meyer M."/>
            <person name="Zivanovic Y."/>
            <person name="Bolotin-Fukuhara M."/>
            <person name="Thierry A."/>
            <person name="Bouchier C."/>
            <person name="Caudron B."/>
            <person name="Scarpelli C."/>
            <person name="Gaillardin C."/>
            <person name="Weissenbach J."/>
            <person name="Wincker P."/>
            <person name="Souciet J.-L."/>
        </authorList>
    </citation>
    <scope>NUCLEOTIDE SEQUENCE [LARGE SCALE GENOMIC DNA]</scope>
    <source>
        <strain>CLIB 122 / E 150</strain>
    </source>
</reference>
<sequence length="758" mass="84305">MDFEEFEEKDGVRFSWNCIPSTRIEASRTVVPISALYTPLKEKPNLPVLQYEPIACRPPCRAVLNSFCQVDLRARAWVCPFCLSRNQLPPQYRDITPENLPHELRPECTTVEYVLSRPAPNPIFLFVVDTCLDAENLTALKDHLVATLSLIPENALVGLITFGAMAQVHEIGYRECGKSFVFRGNRDYTAKQVQEQLGLNQPIGHRVPQQGGHPQAQGAAARFLLPLQNAEFALTNVLEGLQKDPWPVAADRRPIRCTGVALGIALGLLETSFPNCGARVMLFAGGAPTEGPGMIVGPELKEPIRSHHEIEKDTAKHSKAATKFYEGLAKRATTHGQAVDIFAGCYDQIGMHEMRSLPNSTGGALVLCDAFSTSIFKSSLTKMFARDANNFLQMGFNATFDVVPSKELKVSGLIGHAVSMNKKNPSVADTEIGIGQTSSWKMCSITPAHTYATFFEVAQQQGTPAGQIPPGYVQFLTHYHHSSTQQRLRVTTVAKALVPGGDPHIASSFDQEAAAVLMTRIAIFKSETEDGNDIMRWTDKMLIRLCQKFADYRKDDASSFRLAHNFSLYPQFMFHLRRSQFLQVFNNSPDETAFYRHCLNRENLNNSLIMIQPTLLSYSLEQEQPVPVLLDSVSIKPDHILLLDTFFHILIFHGETIANWRNQGYQEKEEYANFAELLQAPRMEVQDLLVDRFPLPRFIDTDAGGSQARFLLSKLNPSNTHQSDSGYGTPGSAVVLTDDVSLQTFMSHLQKLSVAASS</sequence>